<sequence>MALDFLAGCAGGVAGVLVGHPFDTVKVRLQVQSVEKPQYRGTLHCFKSIIKQESVLGLYKGLGSPLMGLTFINALVFGVQGNTLRALGHDSPLNQFLAGAAAGAIQCVICCPMELAKTRLQLQDAGPARTYKGSLDCLAQIYGHEGLRGVNRGMVSTLLRETPSFGVYFLTYDALTRALGCEPGDRLLVPKLLLAGGTSGIVSWLSTYPVDVVKSRLQADGLRGAPRYRGILDCVHQSYRAEGWRVFTRGLASTLLRAFPVNAATFATVTVVLTYARGEEAGPEGEAVPAAPAGPALAQPSSL</sequence>
<keyword id="KW-0025">Alternative splicing</keyword>
<keyword id="KW-0029">Amino-acid transport</keyword>
<keyword id="KW-0472">Membrane</keyword>
<keyword id="KW-0496">Mitochondrion</keyword>
<keyword id="KW-0999">Mitochondrion inner membrane</keyword>
<keyword id="KW-1267">Proteomics identification</keyword>
<keyword id="KW-1185">Reference proteome</keyword>
<keyword id="KW-0677">Repeat</keyword>
<keyword id="KW-0812">Transmembrane</keyword>
<keyword id="KW-1133">Transmembrane helix</keyword>
<keyword id="KW-0813">Transport</keyword>
<feature type="chain" id="PRO_0000090632" description="Mitochondrial basic amino acids transporter">
    <location>
        <begin position="1"/>
        <end position="303"/>
    </location>
</feature>
<feature type="transmembrane region" description="Helical; Name=1" evidence="3">
    <location>
        <begin position="2"/>
        <end position="22"/>
    </location>
</feature>
<feature type="transmembrane region" description="Helical; Name=2" evidence="3">
    <location>
        <begin position="61"/>
        <end position="81"/>
    </location>
</feature>
<feature type="transmembrane region" description="Helical; Name=3" evidence="3">
    <location>
        <begin position="96"/>
        <end position="116"/>
    </location>
</feature>
<feature type="transmembrane region" description="Helical; Name=4" evidence="3">
    <location>
        <begin position="153"/>
        <end position="172"/>
    </location>
</feature>
<feature type="transmembrane region" description="Helical; Name=5" evidence="3">
    <location>
        <begin position="187"/>
        <end position="207"/>
    </location>
</feature>
<feature type="transmembrane region" description="Helical; Name=6" evidence="3">
    <location>
        <begin position="255"/>
        <end position="275"/>
    </location>
</feature>
<feature type="repeat" description="Solcar 1">
    <location>
        <begin position="2"/>
        <end position="86"/>
    </location>
</feature>
<feature type="repeat" description="Solcar 2">
    <location>
        <begin position="90"/>
        <end position="178"/>
    </location>
</feature>
<feature type="repeat" description="Solcar 3">
    <location>
        <begin position="185"/>
        <end position="275"/>
    </location>
</feature>
<feature type="region of interest" description="Disordered" evidence="4">
    <location>
        <begin position="282"/>
        <end position="303"/>
    </location>
</feature>
<feature type="compositionally biased region" description="Low complexity" evidence="4">
    <location>
        <begin position="284"/>
        <end position="303"/>
    </location>
</feature>
<feature type="splice variant" id="VSP_055335" description="In isoform 3." evidence="7 8">
    <location>
        <begin position="1"/>
        <end position="66"/>
    </location>
</feature>
<feature type="splice variant" id="VSP_046286" description="In isoform 2." evidence="7">
    <original>VAGVLVGHPFDTVKVRLQVQSVEKPQYRGTLHCFKSIIKQESVLGLYKGLGSPLMGLTFINALVFGVQGNTLRALGHDSPLNQFLAGAAAGAIQCVICCPMELAKTRLQLQDAGPARTYKGSLDCLAQIYGHE</original>
    <variation>TASGPERGEASVPRDVALLQVHHQARERAGPVQGPGLAAHGAHLHQRAGVRGAGQHPPGPGPRLAPQPVPGRCGGGRHPVRHLLPHGAGQDAAAAAGRGPSAHLQGLAGLPRADLRARGSAWRQPGHGVHVAA</variation>
    <location>
        <begin position="13"/>
        <end position="145"/>
    </location>
</feature>
<feature type="splice variant" id="VSP_046287" description="In isoform 2." evidence="7">
    <location>
        <begin position="146"/>
        <end position="303"/>
    </location>
</feature>
<gene>
    <name evidence="11" type="primary">SLC25A29</name>
    <name type="synonym">C14orf69</name>
    <name type="synonym">ORNT3</name>
</gene>
<proteinExistence type="evidence at protein level"/>
<evidence type="ECO:0000250" key="1">
    <source>
        <dbReference type="UniProtKB" id="Q08DK7"/>
    </source>
</evidence>
<evidence type="ECO:0000250" key="2">
    <source>
        <dbReference type="UniProtKB" id="Q8BL03"/>
    </source>
</evidence>
<evidence type="ECO:0000255" key="3"/>
<evidence type="ECO:0000256" key="4">
    <source>
        <dbReference type="SAM" id="MobiDB-lite"/>
    </source>
</evidence>
<evidence type="ECO:0000269" key="5">
    <source>
    </source>
</evidence>
<evidence type="ECO:0000269" key="6">
    <source>
    </source>
</evidence>
<evidence type="ECO:0000303" key="7">
    <source>
    </source>
</evidence>
<evidence type="ECO:0000303" key="8">
    <source>
    </source>
</evidence>
<evidence type="ECO:0000303" key="9">
    <source>
    </source>
</evidence>
<evidence type="ECO:0000305" key="10"/>
<evidence type="ECO:0000312" key="11">
    <source>
        <dbReference type="HGNC" id="HGNC:20116"/>
    </source>
</evidence>
<accession>Q8N8R3</accession>
<accession>A3KMR5</accession>
<accession>Q541V0</accession>
<organism>
    <name type="scientific">Homo sapiens</name>
    <name type="common">Human</name>
    <dbReference type="NCBI Taxonomy" id="9606"/>
    <lineage>
        <taxon>Eukaryota</taxon>
        <taxon>Metazoa</taxon>
        <taxon>Chordata</taxon>
        <taxon>Craniata</taxon>
        <taxon>Vertebrata</taxon>
        <taxon>Euteleostomi</taxon>
        <taxon>Mammalia</taxon>
        <taxon>Eutheria</taxon>
        <taxon>Euarchontoglires</taxon>
        <taxon>Primates</taxon>
        <taxon>Haplorrhini</taxon>
        <taxon>Catarrhini</taxon>
        <taxon>Hominidae</taxon>
        <taxon>Homo</taxon>
    </lineage>
</organism>
<name>S2529_HUMAN</name>
<comment type="function">
    <text evidence="5 6">Mitochondrial transporter of arginine, lysine, homoarginine, methylarginine and, to a much lesser extent, ornithine and histidine (PubMed:19287344, PubMed:24652292). Does not transport carnitine nor acylcarnitines (PubMed:24652292). Functions by both counter-exchange and uniport mechanisms (PubMed:24652292). Plays a physiological role in the import of basic amino acids into mitochondria for mitochondrial protein synthesis and amino acid degradation (PubMed:19287344, PubMed:24652292).</text>
</comment>
<comment type="catalytic activity">
    <reaction evidence="6">
        <text>L-lysine(out) + L-arginine(in) = L-lysine(in) + L-arginine(out)</text>
        <dbReference type="Rhea" id="RHEA:70827"/>
        <dbReference type="ChEBI" id="CHEBI:32551"/>
        <dbReference type="ChEBI" id="CHEBI:32682"/>
    </reaction>
</comment>
<comment type="catalytic activity">
    <reaction evidence="6">
        <text>L-histidine(out) + L-arginine(in) = L-histidine(in) + L-arginine(out)</text>
        <dbReference type="Rhea" id="RHEA:71063"/>
        <dbReference type="ChEBI" id="CHEBI:32682"/>
        <dbReference type="ChEBI" id="CHEBI:57595"/>
    </reaction>
</comment>
<comment type="catalytic activity">
    <reaction evidence="6">
        <text>L-ornithine(in) + L-arginine(out) = L-ornithine(out) + L-arginine(in)</text>
        <dbReference type="Rhea" id="RHEA:34991"/>
        <dbReference type="ChEBI" id="CHEBI:32682"/>
        <dbReference type="ChEBI" id="CHEBI:46911"/>
    </reaction>
</comment>
<comment type="catalytic activity">
    <reaction evidence="6">
        <text>L-homoarginine(in) + L-arginine(out) = L-homoarginine(out) + L-arginine(in)</text>
        <dbReference type="Rhea" id="RHEA:72799"/>
        <dbReference type="ChEBI" id="CHEBI:32682"/>
        <dbReference type="ChEBI" id="CHEBI:143006"/>
    </reaction>
</comment>
<comment type="catalytic activity">
    <reaction evidence="6">
        <text>N(omega)-methyl-L-arginine(in) + L-arginine(out) = N(omega)-methyl-L-arginine(out) + L-arginine(in)</text>
        <dbReference type="Rhea" id="RHEA:72803"/>
        <dbReference type="ChEBI" id="CHEBI:32682"/>
        <dbReference type="ChEBI" id="CHEBI:114953"/>
    </reaction>
</comment>
<comment type="catalytic activity">
    <reaction evidence="6">
        <text>L-arginine(in) = L-arginine(out)</text>
        <dbReference type="Rhea" id="RHEA:32143"/>
        <dbReference type="ChEBI" id="CHEBI:32682"/>
    </reaction>
</comment>
<comment type="catalytic activity">
    <reaction evidence="6">
        <text>L-lysine(in) = L-lysine(out)</text>
        <dbReference type="Rhea" id="RHEA:70935"/>
        <dbReference type="ChEBI" id="CHEBI:32551"/>
    </reaction>
</comment>
<comment type="catalytic activity">
    <reaction evidence="6">
        <text>L-ornithine(in) = L-ornithine(out)</text>
        <dbReference type="Rhea" id="RHEA:71199"/>
        <dbReference type="ChEBI" id="CHEBI:46911"/>
    </reaction>
</comment>
<comment type="catalytic activity">
    <reaction evidence="6">
        <text>L-histidine(out) = L-histidine(in)</text>
        <dbReference type="Rhea" id="RHEA:72807"/>
        <dbReference type="ChEBI" id="CHEBI:57595"/>
    </reaction>
</comment>
<comment type="subcellular location">
    <subcellularLocation>
        <location evidence="5">Mitochondrion inner membrane</location>
        <topology evidence="3">Multi-pass membrane protein</topology>
    </subcellularLocation>
</comment>
<comment type="alternative products">
    <event type="alternative splicing"/>
    <isoform>
        <id>Q8N8R3-1</id>
        <name>1</name>
        <sequence type="displayed"/>
    </isoform>
    <isoform>
        <id>Q8N8R3-2</id>
        <name>2</name>
        <sequence type="described" ref="VSP_046286 VSP_046287"/>
    </isoform>
    <isoform>
        <id>Q8N8R3-3</id>
        <name>3</name>
        <sequence type="described" ref="VSP_055335"/>
    </isoform>
</comment>
<comment type="miscellaneous">
    <molecule>Isoform 2</molecule>
    <text evidence="10">May be produced at very low levels due to a premature stop codon in the mRNA, leading to nonsense-mediated mRNA decay.</text>
</comment>
<comment type="similarity">
    <text evidence="10">Belongs to the mitochondrial carrier (TC 2.A.29) family.</text>
</comment>
<comment type="caution">
    <text evidence="1 6">Was initially proposed to transport palmitoylcarnitine, based on complementation experiments in yeast mutants lacking CRC1 and CIT2 and release of radiolabeled carnitine from mitochondria incubated with radiolabeled palmitoylcarnithine (By similarity). Later experiments done primarily with human indicate the protein functions instead as transporter of basic amino acids (PubMed:24652292).</text>
</comment>
<comment type="sequence caution" evidence="10">
    <conflict type="erroneous initiation">
        <sequence resource="EMBL-CDS" id="CAD62317"/>
    </conflict>
    <text>Extended N-terminus.</text>
</comment>
<protein>
    <recommendedName>
        <fullName>Mitochondrial basic amino acids transporter</fullName>
    </recommendedName>
    <alternativeName>
        <fullName evidence="2">Carnitine/acylcarnitine translocase-like</fullName>
        <shortName evidence="2">CACT-like</shortName>
    </alternativeName>
    <alternativeName>
        <fullName>Mitochondrial carnitine/acylcarnitine carrier protein CACL</fullName>
    </alternativeName>
    <alternativeName>
        <fullName evidence="9">Mitochondrial ornithine transporter 3</fullName>
    </alternativeName>
    <alternativeName>
        <fullName>Solute carrier family 25 member 29</fullName>
    </alternativeName>
</protein>
<reference key="1">
    <citation type="submission" date="2003-02" db="EMBL/GenBank/DDBJ databases">
        <title>Full-length cDNA libraries and normalization.</title>
        <authorList>
            <person name="Li W.B."/>
            <person name="Gruber C."/>
            <person name="Jessee J."/>
            <person name="Polayes D."/>
        </authorList>
    </citation>
    <scope>NUCLEOTIDE SEQUENCE [LARGE SCALE MRNA] (ISOFORM 1)</scope>
    <source>
        <tissue>Fetal brain</tissue>
    </source>
</reference>
<reference key="2">
    <citation type="journal article" date="2004" name="Nat. Genet.">
        <title>Complete sequencing and characterization of 21,243 full-length human cDNAs.</title>
        <authorList>
            <person name="Ota T."/>
            <person name="Suzuki Y."/>
            <person name="Nishikawa T."/>
            <person name="Otsuki T."/>
            <person name="Sugiyama T."/>
            <person name="Irie R."/>
            <person name="Wakamatsu A."/>
            <person name="Hayashi K."/>
            <person name="Sato H."/>
            <person name="Nagai K."/>
            <person name="Kimura K."/>
            <person name="Makita H."/>
            <person name="Sekine M."/>
            <person name="Obayashi M."/>
            <person name="Nishi T."/>
            <person name="Shibahara T."/>
            <person name="Tanaka T."/>
            <person name="Ishii S."/>
            <person name="Yamamoto J."/>
            <person name="Saito K."/>
            <person name="Kawai Y."/>
            <person name="Isono Y."/>
            <person name="Nakamura Y."/>
            <person name="Nagahari K."/>
            <person name="Murakami K."/>
            <person name="Yasuda T."/>
            <person name="Iwayanagi T."/>
            <person name="Wagatsuma M."/>
            <person name="Shiratori A."/>
            <person name="Sudo H."/>
            <person name="Hosoiri T."/>
            <person name="Kaku Y."/>
            <person name="Kodaira H."/>
            <person name="Kondo H."/>
            <person name="Sugawara M."/>
            <person name="Takahashi M."/>
            <person name="Kanda K."/>
            <person name="Yokoi T."/>
            <person name="Furuya T."/>
            <person name="Kikkawa E."/>
            <person name="Omura Y."/>
            <person name="Abe K."/>
            <person name="Kamihara K."/>
            <person name="Katsuta N."/>
            <person name="Sato K."/>
            <person name="Tanikawa M."/>
            <person name="Yamazaki M."/>
            <person name="Ninomiya K."/>
            <person name="Ishibashi T."/>
            <person name="Yamashita H."/>
            <person name="Murakawa K."/>
            <person name="Fujimori K."/>
            <person name="Tanai H."/>
            <person name="Kimata M."/>
            <person name="Watanabe M."/>
            <person name="Hiraoka S."/>
            <person name="Chiba Y."/>
            <person name="Ishida S."/>
            <person name="Ono Y."/>
            <person name="Takiguchi S."/>
            <person name="Watanabe S."/>
            <person name="Yosida M."/>
            <person name="Hotuta T."/>
            <person name="Kusano J."/>
            <person name="Kanehori K."/>
            <person name="Takahashi-Fujii A."/>
            <person name="Hara H."/>
            <person name="Tanase T.-O."/>
            <person name="Nomura Y."/>
            <person name="Togiya S."/>
            <person name="Komai F."/>
            <person name="Hara R."/>
            <person name="Takeuchi K."/>
            <person name="Arita M."/>
            <person name="Imose N."/>
            <person name="Musashino K."/>
            <person name="Yuuki H."/>
            <person name="Oshima A."/>
            <person name="Sasaki N."/>
            <person name="Aotsuka S."/>
            <person name="Yoshikawa Y."/>
            <person name="Matsunawa H."/>
            <person name="Ichihara T."/>
            <person name="Shiohata N."/>
            <person name="Sano S."/>
            <person name="Moriya S."/>
            <person name="Momiyama H."/>
            <person name="Satoh N."/>
            <person name="Takami S."/>
            <person name="Terashima Y."/>
            <person name="Suzuki O."/>
            <person name="Nakagawa S."/>
            <person name="Senoh A."/>
            <person name="Mizoguchi H."/>
            <person name="Goto Y."/>
            <person name="Shimizu F."/>
            <person name="Wakebe H."/>
            <person name="Hishigaki H."/>
            <person name="Watanabe T."/>
            <person name="Sugiyama A."/>
            <person name="Takemoto M."/>
            <person name="Kawakami B."/>
            <person name="Yamazaki M."/>
            <person name="Watanabe K."/>
            <person name="Kumagai A."/>
            <person name="Itakura S."/>
            <person name="Fukuzumi Y."/>
            <person name="Fujimori Y."/>
            <person name="Komiyama M."/>
            <person name="Tashiro H."/>
            <person name="Tanigami A."/>
            <person name="Fujiwara T."/>
            <person name="Ono T."/>
            <person name="Yamada K."/>
            <person name="Fujii Y."/>
            <person name="Ozaki K."/>
            <person name="Hirao M."/>
            <person name="Ohmori Y."/>
            <person name="Kawabata A."/>
            <person name="Hikiji T."/>
            <person name="Kobatake N."/>
            <person name="Inagaki H."/>
            <person name="Ikema Y."/>
            <person name="Okamoto S."/>
            <person name="Okitani R."/>
            <person name="Kawakami T."/>
            <person name="Noguchi S."/>
            <person name="Itoh T."/>
            <person name="Shigeta K."/>
            <person name="Senba T."/>
            <person name="Matsumura K."/>
            <person name="Nakajima Y."/>
            <person name="Mizuno T."/>
            <person name="Morinaga M."/>
            <person name="Sasaki M."/>
            <person name="Togashi T."/>
            <person name="Oyama M."/>
            <person name="Hata H."/>
            <person name="Watanabe M."/>
            <person name="Komatsu T."/>
            <person name="Mizushima-Sugano J."/>
            <person name="Satoh T."/>
            <person name="Shirai Y."/>
            <person name="Takahashi Y."/>
            <person name="Nakagawa K."/>
            <person name="Okumura K."/>
            <person name="Nagase T."/>
            <person name="Nomura N."/>
            <person name="Kikuchi H."/>
            <person name="Masuho Y."/>
            <person name="Yamashita R."/>
            <person name="Nakai K."/>
            <person name="Yada T."/>
            <person name="Nakamura Y."/>
            <person name="Ohara O."/>
            <person name="Isogai T."/>
            <person name="Sugano S."/>
        </authorList>
    </citation>
    <scope>NUCLEOTIDE SEQUENCE [LARGE SCALE MRNA] (ISOFORMS 1; 2 AND 3)</scope>
    <source>
        <tissue>Amygdala</tissue>
        <tissue>Brain</tissue>
        <tissue>Hepatoma</tissue>
        <tissue>Teratocarcinoma</tissue>
    </source>
</reference>
<reference key="3">
    <citation type="journal article" date="2003" name="Nature">
        <title>The DNA sequence and analysis of human chromosome 14.</title>
        <authorList>
            <person name="Heilig R."/>
            <person name="Eckenberg R."/>
            <person name="Petit J.-L."/>
            <person name="Fonknechten N."/>
            <person name="Da Silva C."/>
            <person name="Cattolico L."/>
            <person name="Levy M."/>
            <person name="Barbe V."/>
            <person name="De Berardinis V."/>
            <person name="Ureta-Vidal A."/>
            <person name="Pelletier E."/>
            <person name="Vico V."/>
            <person name="Anthouard V."/>
            <person name="Rowen L."/>
            <person name="Madan A."/>
            <person name="Qin S."/>
            <person name="Sun H."/>
            <person name="Du H."/>
            <person name="Pepin K."/>
            <person name="Artiguenave F."/>
            <person name="Robert C."/>
            <person name="Cruaud C."/>
            <person name="Bruels T."/>
            <person name="Jaillon O."/>
            <person name="Friedlander L."/>
            <person name="Samson G."/>
            <person name="Brottier P."/>
            <person name="Cure S."/>
            <person name="Segurens B."/>
            <person name="Aniere F."/>
            <person name="Samain S."/>
            <person name="Crespeau H."/>
            <person name="Abbasi N."/>
            <person name="Aiach N."/>
            <person name="Boscus D."/>
            <person name="Dickhoff R."/>
            <person name="Dors M."/>
            <person name="Dubois I."/>
            <person name="Friedman C."/>
            <person name="Gouyvenoux M."/>
            <person name="James R."/>
            <person name="Madan A."/>
            <person name="Mairey-Estrada B."/>
            <person name="Mangenot S."/>
            <person name="Martins N."/>
            <person name="Menard M."/>
            <person name="Oztas S."/>
            <person name="Ratcliffe A."/>
            <person name="Shaffer T."/>
            <person name="Trask B."/>
            <person name="Vacherie B."/>
            <person name="Bellemere C."/>
            <person name="Belser C."/>
            <person name="Besnard-Gonnet M."/>
            <person name="Bartol-Mavel D."/>
            <person name="Boutard M."/>
            <person name="Briez-Silla S."/>
            <person name="Combette S."/>
            <person name="Dufosse-Laurent V."/>
            <person name="Ferron C."/>
            <person name="Lechaplais C."/>
            <person name="Louesse C."/>
            <person name="Muselet D."/>
            <person name="Magdelenat G."/>
            <person name="Pateau E."/>
            <person name="Petit E."/>
            <person name="Sirvain-Trukniewicz P."/>
            <person name="Trybou A."/>
            <person name="Vega-Czarny N."/>
            <person name="Bataille E."/>
            <person name="Bluet E."/>
            <person name="Bordelais I."/>
            <person name="Dubois M."/>
            <person name="Dumont C."/>
            <person name="Guerin T."/>
            <person name="Haffray S."/>
            <person name="Hammadi R."/>
            <person name="Muanga J."/>
            <person name="Pellouin V."/>
            <person name="Robert D."/>
            <person name="Wunderle E."/>
            <person name="Gauguet G."/>
            <person name="Roy A."/>
            <person name="Sainte-Marthe L."/>
            <person name="Verdier J."/>
            <person name="Verdier-Discala C."/>
            <person name="Hillier L.W."/>
            <person name="Fulton L."/>
            <person name="McPherson J."/>
            <person name="Matsuda F."/>
            <person name="Wilson R."/>
            <person name="Scarpelli C."/>
            <person name="Gyapay G."/>
            <person name="Wincker P."/>
            <person name="Saurin W."/>
            <person name="Quetier F."/>
            <person name="Waterston R."/>
            <person name="Hood L."/>
            <person name="Weissenbach J."/>
        </authorList>
    </citation>
    <scope>NUCLEOTIDE SEQUENCE [LARGE SCALE GENOMIC DNA]</scope>
</reference>
<reference key="4">
    <citation type="submission" date="2005-09" db="EMBL/GenBank/DDBJ databases">
        <authorList>
            <person name="Mural R.J."/>
            <person name="Istrail S."/>
            <person name="Sutton G.G."/>
            <person name="Florea L."/>
            <person name="Halpern A.L."/>
            <person name="Mobarry C.M."/>
            <person name="Lippert R."/>
            <person name="Walenz B."/>
            <person name="Shatkay H."/>
            <person name="Dew I."/>
            <person name="Miller J.R."/>
            <person name="Flanigan M.J."/>
            <person name="Edwards N.J."/>
            <person name="Bolanos R."/>
            <person name="Fasulo D."/>
            <person name="Halldorsson B.V."/>
            <person name="Hannenhalli S."/>
            <person name="Turner R."/>
            <person name="Yooseph S."/>
            <person name="Lu F."/>
            <person name="Nusskern D.R."/>
            <person name="Shue B.C."/>
            <person name="Zheng X.H."/>
            <person name="Zhong F."/>
            <person name="Delcher A.L."/>
            <person name="Huson D.H."/>
            <person name="Kravitz S.A."/>
            <person name="Mouchard L."/>
            <person name="Reinert K."/>
            <person name="Remington K.A."/>
            <person name="Clark A.G."/>
            <person name="Waterman M.S."/>
            <person name="Eichler E.E."/>
            <person name="Adams M.D."/>
            <person name="Hunkapiller M.W."/>
            <person name="Myers E.W."/>
            <person name="Venter J.C."/>
        </authorList>
    </citation>
    <scope>NUCLEOTIDE SEQUENCE [LARGE SCALE GENOMIC DNA]</scope>
</reference>
<reference key="5">
    <citation type="journal article" date="2004" name="Genome Res.">
        <title>The status, quality, and expansion of the NIH full-length cDNA project: the Mammalian Gene Collection (MGC).</title>
        <authorList>
            <consortium name="The MGC Project Team"/>
        </authorList>
    </citation>
    <scope>NUCLEOTIDE SEQUENCE [LARGE SCALE MRNA] (ISOFORM 3)</scope>
    <source>
        <tissue>Brain</tissue>
    </source>
</reference>
<reference key="6">
    <citation type="journal article" date="2009" name="Pediatr. Res.">
        <title>The human and mouse SLC25A29 mitochondrial transporters rescue the deficient ornithine metabolism in fibroblasts of patients with the hyperornithinemia-hyperammonemia-homocitrullinuria (HHH) syndrome.</title>
        <authorList>
            <person name="Camacho J.A."/>
            <person name="Rioseco-Camacho N."/>
        </authorList>
    </citation>
    <scope>FUNCTION</scope>
    <scope>SUBCELLULAR LOCATION</scope>
</reference>
<reference key="7">
    <citation type="journal article" date="2014" name="J. Biol. Chem.">
        <title>The human gene SLC25A29, of solute carrier family 25, encodes a mitochondrial transporter of basic amino acids.</title>
        <authorList>
            <person name="Porcelli V."/>
            <person name="Fiermonte G."/>
            <person name="Longo A."/>
            <person name="Palmieri F."/>
        </authorList>
    </citation>
    <scope>FUNCTION</scope>
    <scope>TRANSPORTER ACTIVITY</scope>
    <scope>SUBSTRATE SPECIFICITY</scope>
</reference>
<reference key="8">
    <citation type="journal article" date="2015" name="Proteomics">
        <title>N-terminome analysis of the human mitochondrial proteome.</title>
        <authorList>
            <person name="Vaca Jacome A.S."/>
            <person name="Rabilloud T."/>
            <person name="Schaeffer-Reiss C."/>
            <person name="Rompais M."/>
            <person name="Ayoub D."/>
            <person name="Lane L."/>
            <person name="Bairoch A."/>
            <person name="Van Dorsselaer A."/>
            <person name="Carapito C."/>
        </authorList>
    </citation>
    <scope>IDENTIFICATION BY MASS SPECTROMETRY [LARGE SCALE ANALYSIS]</scope>
</reference>
<dbReference type="EMBL" id="BX247983">
    <property type="protein sequence ID" value="CAD62317.1"/>
    <property type="status" value="ALT_INIT"/>
    <property type="molecule type" value="mRNA"/>
</dbReference>
<dbReference type="EMBL" id="AK095532">
    <property type="protein sequence ID" value="BAG53079.1"/>
    <property type="molecule type" value="mRNA"/>
</dbReference>
<dbReference type="EMBL" id="AK096294">
    <property type="protein sequence ID" value="BAC04751.1"/>
    <property type="molecule type" value="mRNA"/>
</dbReference>
<dbReference type="EMBL" id="AK123821">
    <property type="protein sequence ID" value="BAG53964.1"/>
    <property type="molecule type" value="mRNA"/>
</dbReference>
<dbReference type="EMBL" id="AK172788">
    <property type="protein sequence ID" value="BAD18767.1"/>
    <property type="molecule type" value="mRNA"/>
</dbReference>
<dbReference type="EMBL" id="AK289627">
    <property type="protein sequence ID" value="BAF82316.1"/>
    <property type="molecule type" value="mRNA"/>
</dbReference>
<dbReference type="EMBL" id="AL157871">
    <property type="status" value="NOT_ANNOTATED_CDS"/>
    <property type="molecule type" value="Genomic_DNA"/>
</dbReference>
<dbReference type="EMBL" id="CH471061">
    <property type="protein sequence ID" value="EAW81692.1"/>
    <property type="molecule type" value="Genomic_DNA"/>
</dbReference>
<dbReference type="EMBL" id="CH471061">
    <property type="protein sequence ID" value="EAW81695.1"/>
    <property type="molecule type" value="Genomic_DNA"/>
</dbReference>
<dbReference type="EMBL" id="BC132964">
    <property type="protein sequence ID" value="AAI32965.1"/>
    <property type="molecule type" value="mRNA"/>
</dbReference>
<dbReference type="EMBL" id="BC132966">
    <property type="protein sequence ID" value="AAI32967.1"/>
    <property type="molecule type" value="mRNA"/>
</dbReference>
<dbReference type="CCDS" id="CCDS32156.1">
    <molecule id="Q8N8R3-1"/>
</dbReference>
<dbReference type="RefSeq" id="NP_001034444.1">
    <molecule id="Q8N8R3-1"/>
    <property type="nucleotide sequence ID" value="NM_001039355.3"/>
</dbReference>
<dbReference type="RefSeq" id="NP_001278742.1">
    <molecule id="Q8N8R3-3"/>
    <property type="nucleotide sequence ID" value="NM_001291813.2"/>
</dbReference>
<dbReference type="RefSeq" id="NP_001278743.1">
    <molecule id="Q8N8R3-3"/>
    <property type="nucleotide sequence ID" value="NM_001291814.2"/>
</dbReference>
<dbReference type="RefSeq" id="NP_001339749.1">
    <molecule id="Q8N8R3-3"/>
    <property type="nucleotide sequence ID" value="NM_001352820.2"/>
</dbReference>
<dbReference type="RefSeq" id="NP_001339751.1">
    <molecule id="Q8N8R3-3"/>
    <property type="nucleotide sequence ID" value="NM_001352822.2"/>
</dbReference>
<dbReference type="RefSeq" id="NP_001339752.1">
    <molecule id="Q8N8R3-3"/>
    <property type="nucleotide sequence ID" value="NM_001352823.2"/>
</dbReference>
<dbReference type="RefSeq" id="NP_689546.1">
    <molecule id="Q8N8R3-3"/>
    <property type="nucleotide sequence ID" value="NM_152333.4"/>
</dbReference>
<dbReference type="RefSeq" id="XP_011534748.1">
    <property type="nucleotide sequence ID" value="XM_011536446.1"/>
</dbReference>
<dbReference type="RefSeq" id="XP_011534749.1">
    <property type="nucleotide sequence ID" value="XM_011536447.1"/>
</dbReference>
<dbReference type="RefSeq" id="XP_011534750.1">
    <property type="nucleotide sequence ID" value="XM_011536448.1"/>
</dbReference>
<dbReference type="RefSeq" id="XP_016876469.1">
    <property type="nucleotide sequence ID" value="XM_017020980.1"/>
</dbReference>
<dbReference type="RefSeq" id="XP_016876470.1">
    <property type="nucleotide sequence ID" value="XM_017020981.1"/>
</dbReference>
<dbReference type="RefSeq" id="XP_016876471.1">
    <property type="nucleotide sequence ID" value="XM_017020982.1"/>
</dbReference>
<dbReference type="RefSeq" id="XP_016876472.1">
    <property type="nucleotide sequence ID" value="XM_017020983.1"/>
</dbReference>
<dbReference type="RefSeq" id="XP_016876473.1">
    <property type="nucleotide sequence ID" value="XM_017020984.1"/>
</dbReference>
<dbReference type="RefSeq" id="XP_016876474.1">
    <property type="nucleotide sequence ID" value="XM_017020985.1"/>
</dbReference>
<dbReference type="RefSeq" id="XP_016876475.1">
    <property type="nucleotide sequence ID" value="XM_017020986.1"/>
</dbReference>
<dbReference type="RefSeq" id="XP_016876476.1">
    <property type="nucleotide sequence ID" value="XM_017020987.1"/>
</dbReference>
<dbReference type="RefSeq" id="XP_047286906.1">
    <molecule id="Q8N8R3-3"/>
    <property type="nucleotide sequence ID" value="XM_047430950.1"/>
</dbReference>
<dbReference type="RefSeq" id="XP_047286907.1">
    <molecule id="Q8N8R3-3"/>
    <property type="nucleotide sequence ID" value="XM_047430951.1"/>
</dbReference>
<dbReference type="RefSeq" id="XP_047286908.1">
    <molecule id="Q8N8R3-3"/>
    <property type="nucleotide sequence ID" value="XM_047430952.1"/>
</dbReference>
<dbReference type="RefSeq" id="XP_047286909.1">
    <molecule id="Q8N8R3-3"/>
    <property type="nucleotide sequence ID" value="XM_047430953.1"/>
</dbReference>
<dbReference type="RefSeq" id="XP_047286910.1">
    <molecule id="Q8N8R3-3"/>
    <property type="nucleotide sequence ID" value="XM_047430954.1"/>
</dbReference>
<dbReference type="RefSeq" id="XP_047286912.1">
    <molecule id="Q8N8R3-3"/>
    <property type="nucleotide sequence ID" value="XM_047430956.1"/>
</dbReference>
<dbReference type="RefSeq" id="XP_047286913.1">
    <molecule id="Q8N8R3-3"/>
    <property type="nucleotide sequence ID" value="XM_047430957.1"/>
</dbReference>
<dbReference type="RefSeq" id="XP_047286914.1">
    <molecule id="Q8N8R3-3"/>
    <property type="nucleotide sequence ID" value="XM_047430958.1"/>
</dbReference>
<dbReference type="RefSeq" id="XP_047286915.1">
    <molecule id="Q8N8R3-3"/>
    <property type="nucleotide sequence ID" value="XM_047430959.1"/>
</dbReference>
<dbReference type="RefSeq" id="XP_047286916.1">
    <molecule id="Q8N8R3-3"/>
    <property type="nucleotide sequence ID" value="XM_047430960.1"/>
</dbReference>
<dbReference type="RefSeq" id="XP_047286917.1">
    <molecule id="Q8N8R3-3"/>
    <property type="nucleotide sequence ID" value="XM_047430961.1"/>
</dbReference>
<dbReference type="RefSeq" id="XP_047286918.1">
    <molecule id="Q8N8R3-3"/>
    <property type="nucleotide sequence ID" value="XM_047430962.1"/>
</dbReference>
<dbReference type="RefSeq" id="XP_054231390.1">
    <molecule id="Q8N8R3-3"/>
    <property type="nucleotide sequence ID" value="XM_054375415.1"/>
</dbReference>
<dbReference type="RefSeq" id="XP_054231391.1">
    <molecule id="Q8N8R3-3"/>
    <property type="nucleotide sequence ID" value="XM_054375416.1"/>
</dbReference>
<dbReference type="RefSeq" id="XP_054231392.1">
    <molecule id="Q8N8R3-3"/>
    <property type="nucleotide sequence ID" value="XM_054375417.1"/>
</dbReference>
<dbReference type="RefSeq" id="XP_054231393.1">
    <molecule id="Q8N8R3-3"/>
    <property type="nucleotide sequence ID" value="XM_054375418.1"/>
</dbReference>
<dbReference type="RefSeq" id="XP_054231394.1">
    <molecule id="Q8N8R3-3"/>
    <property type="nucleotide sequence ID" value="XM_054375419.1"/>
</dbReference>
<dbReference type="RefSeq" id="XP_054231395.1">
    <molecule id="Q8N8R3-3"/>
    <property type="nucleotide sequence ID" value="XM_054375420.1"/>
</dbReference>
<dbReference type="RefSeq" id="XP_054231396.1">
    <molecule id="Q8N8R3-3"/>
    <property type="nucleotide sequence ID" value="XM_054375421.1"/>
</dbReference>
<dbReference type="RefSeq" id="XP_054231397.1">
    <molecule id="Q8N8R3-3"/>
    <property type="nucleotide sequence ID" value="XM_054375422.1"/>
</dbReference>
<dbReference type="RefSeq" id="XP_054231398.1">
    <molecule id="Q8N8R3-3"/>
    <property type="nucleotide sequence ID" value="XM_054375423.1"/>
</dbReference>
<dbReference type="RefSeq" id="XP_054231399.1">
    <molecule id="Q8N8R3-3"/>
    <property type="nucleotide sequence ID" value="XM_054375424.1"/>
</dbReference>
<dbReference type="RefSeq" id="XP_054231400.1">
    <molecule id="Q8N8R3-3"/>
    <property type="nucleotide sequence ID" value="XM_054375425.1"/>
</dbReference>
<dbReference type="RefSeq" id="XP_054231401.1">
    <molecule id="Q8N8R3-3"/>
    <property type="nucleotide sequence ID" value="XM_054375426.1"/>
</dbReference>
<dbReference type="RefSeq" id="XP_054231402.1">
    <molecule id="Q8N8R3-3"/>
    <property type="nucleotide sequence ID" value="XM_054375427.1"/>
</dbReference>
<dbReference type="SMR" id="Q8N8R3"/>
<dbReference type="BioGRID" id="125814">
    <property type="interactions" value="99"/>
</dbReference>
<dbReference type="FunCoup" id="Q8N8R3">
    <property type="interactions" value="620"/>
</dbReference>
<dbReference type="IntAct" id="Q8N8R3">
    <property type="interactions" value="23"/>
</dbReference>
<dbReference type="STRING" id="9606.ENSP00000352167"/>
<dbReference type="DrugBank" id="DB00583">
    <property type="generic name" value="Levocarnitine"/>
</dbReference>
<dbReference type="TCDB" id="2.A.29.8.9">
    <property type="family name" value="the mitochondrial carrier (mc) family"/>
</dbReference>
<dbReference type="iPTMnet" id="Q8N8R3"/>
<dbReference type="PhosphoSitePlus" id="Q8N8R3"/>
<dbReference type="BioMuta" id="SLC25A29"/>
<dbReference type="DMDM" id="31340019"/>
<dbReference type="jPOST" id="Q8N8R3"/>
<dbReference type="MassIVE" id="Q8N8R3"/>
<dbReference type="PaxDb" id="9606-ENSP00000352167"/>
<dbReference type="PeptideAtlas" id="Q8N8R3"/>
<dbReference type="ProteomicsDB" id="580"/>
<dbReference type="ProteomicsDB" id="72454">
    <molecule id="Q8N8R3-1"/>
</dbReference>
<dbReference type="Pumba" id="Q8N8R3"/>
<dbReference type="Antibodypedia" id="14405">
    <property type="antibodies" value="32 antibodies from 16 providers"/>
</dbReference>
<dbReference type="DNASU" id="123096"/>
<dbReference type="Ensembl" id="ENST00000359232.8">
    <molecule id="Q8N8R3-1"/>
    <property type="protein sequence ID" value="ENSP00000352167.3"/>
    <property type="gene ID" value="ENSG00000197119.13"/>
</dbReference>
<dbReference type="Ensembl" id="ENST00000392908.7">
    <molecule id="Q8N8R3-2"/>
    <property type="protein sequence ID" value="ENSP00000376640.3"/>
    <property type="gene ID" value="ENSG00000197119.13"/>
</dbReference>
<dbReference type="Ensembl" id="ENST00000554912.1">
    <molecule id="Q8N8R3-3"/>
    <property type="protein sequence ID" value="ENSP00000450913.1"/>
    <property type="gene ID" value="ENSG00000197119.13"/>
</dbReference>
<dbReference type="Ensembl" id="ENST00000555927.5">
    <molecule id="Q8N8R3-3"/>
    <property type="protein sequence ID" value="ENSP00000452078.1"/>
    <property type="gene ID" value="ENSG00000197119.13"/>
</dbReference>
<dbReference type="Ensembl" id="ENST00000556505.5">
    <molecule id="Q8N8R3-3"/>
    <property type="protein sequence ID" value="ENSP00000452446.1"/>
    <property type="gene ID" value="ENSG00000197119.13"/>
</dbReference>
<dbReference type="GeneID" id="123096"/>
<dbReference type="KEGG" id="hsa:123096"/>
<dbReference type="MANE-Select" id="ENST00000359232.8">
    <property type="protein sequence ID" value="ENSP00000352167.3"/>
    <property type="RefSeq nucleotide sequence ID" value="NM_001039355.3"/>
    <property type="RefSeq protein sequence ID" value="NP_001034444.1"/>
</dbReference>
<dbReference type="UCSC" id="uc001yha.4">
    <molecule id="Q8N8R3-1"/>
    <property type="organism name" value="human"/>
</dbReference>
<dbReference type="AGR" id="HGNC:20116"/>
<dbReference type="CTD" id="123096"/>
<dbReference type="DisGeNET" id="123096"/>
<dbReference type="GeneCards" id="SLC25A29"/>
<dbReference type="HGNC" id="HGNC:20116">
    <property type="gene designation" value="SLC25A29"/>
</dbReference>
<dbReference type="HPA" id="ENSG00000197119">
    <property type="expression patterns" value="Tissue enhanced (thyroid)"/>
</dbReference>
<dbReference type="MalaCards" id="SLC25A29"/>
<dbReference type="MIM" id="615064">
    <property type="type" value="gene"/>
</dbReference>
<dbReference type="neXtProt" id="NX_Q8N8R3"/>
<dbReference type="OpenTargets" id="ENSG00000197119"/>
<dbReference type="PharmGKB" id="PA134980581"/>
<dbReference type="VEuPathDB" id="HostDB:ENSG00000197119"/>
<dbReference type="eggNOG" id="KOG0762">
    <property type="taxonomic scope" value="Eukaryota"/>
</dbReference>
<dbReference type="GeneTree" id="ENSGT00940000157766"/>
<dbReference type="HOGENOM" id="CLU_015166_16_1_1"/>
<dbReference type="InParanoid" id="Q8N8R3"/>
<dbReference type="OMA" id="VYRESGW"/>
<dbReference type="OrthoDB" id="193856at2759"/>
<dbReference type="PAN-GO" id="Q8N8R3">
    <property type="GO annotations" value="3 GO annotations based on evolutionary models"/>
</dbReference>
<dbReference type="PhylomeDB" id="Q8N8R3"/>
<dbReference type="TreeFam" id="TF351739"/>
<dbReference type="PathwayCommons" id="Q8N8R3"/>
<dbReference type="Reactome" id="R-HSA-352230">
    <property type="pathway name" value="Amino acid transport across the plasma membrane"/>
</dbReference>
<dbReference type="BioGRID-ORCS" id="123096">
    <property type="hits" value="14 hits in 1163 CRISPR screens"/>
</dbReference>
<dbReference type="ChiTaRS" id="SLC25A29">
    <property type="organism name" value="human"/>
</dbReference>
<dbReference type="GenomeRNAi" id="123096"/>
<dbReference type="Pharos" id="Q8N8R3">
    <property type="development level" value="Tbio"/>
</dbReference>
<dbReference type="PRO" id="PR:Q8N8R3"/>
<dbReference type="Proteomes" id="UP000005640">
    <property type="component" value="Chromosome 14"/>
</dbReference>
<dbReference type="RNAct" id="Q8N8R3">
    <property type="molecule type" value="protein"/>
</dbReference>
<dbReference type="Bgee" id="ENSG00000197119">
    <property type="expression patterns" value="Expressed in right uterine tube and 173 other cell types or tissues"/>
</dbReference>
<dbReference type="ExpressionAtlas" id="Q8N8R3">
    <property type="expression patterns" value="baseline and differential"/>
</dbReference>
<dbReference type="GO" id="GO:0005743">
    <property type="term" value="C:mitochondrial inner membrane"/>
    <property type="evidence" value="ECO:0000304"/>
    <property type="project" value="Reactome"/>
</dbReference>
<dbReference type="GO" id="GO:0005739">
    <property type="term" value="C:mitochondrion"/>
    <property type="evidence" value="ECO:0000314"/>
    <property type="project" value="UniProtKB"/>
</dbReference>
<dbReference type="GO" id="GO:0015174">
    <property type="term" value="F:basic amino acid transmembrane transporter activity"/>
    <property type="evidence" value="ECO:0000315"/>
    <property type="project" value="UniProtKB"/>
</dbReference>
<dbReference type="GO" id="GO:0005289">
    <property type="term" value="F:high-affinity L-arginine transmembrane transporter activity"/>
    <property type="evidence" value="ECO:0000314"/>
    <property type="project" value="UniProtKB"/>
</dbReference>
<dbReference type="GO" id="GO:0005292">
    <property type="term" value="F:high-affinity lysine transmembrane transporter activity"/>
    <property type="evidence" value="ECO:0000314"/>
    <property type="project" value="UniProtKB"/>
</dbReference>
<dbReference type="GO" id="GO:0006865">
    <property type="term" value="P:amino acid transport"/>
    <property type="evidence" value="ECO:0000304"/>
    <property type="project" value="Reactome"/>
</dbReference>
<dbReference type="GO" id="GO:1903826">
    <property type="term" value="P:L-arginine transmembrane transport"/>
    <property type="evidence" value="ECO:0000314"/>
    <property type="project" value="UniProtKB"/>
</dbReference>
<dbReference type="GO" id="GO:0089709">
    <property type="term" value="P:L-histidine transmembrane transport"/>
    <property type="evidence" value="ECO:0000314"/>
    <property type="project" value="UniProtKB"/>
</dbReference>
<dbReference type="GO" id="GO:1903401">
    <property type="term" value="P:L-lysine transmembrane transport"/>
    <property type="evidence" value="ECO:0000314"/>
    <property type="project" value="UniProtKB"/>
</dbReference>
<dbReference type="GO" id="GO:1990575">
    <property type="term" value="P:mitochondrial L-ornithine transmembrane transport"/>
    <property type="evidence" value="ECO:0000315"/>
    <property type="project" value="UniProtKB"/>
</dbReference>
<dbReference type="GO" id="GO:0015822">
    <property type="term" value="P:ornithine transport"/>
    <property type="evidence" value="ECO:0000314"/>
    <property type="project" value="UniProtKB"/>
</dbReference>
<dbReference type="FunFam" id="1.50.40.10:FF:000037">
    <property type="entry name" value="Solute carrier family 25 member 29"/>
    <property type="match status" value="1"/>
</dbReference>
<dbReference type="Gene3D" id="1.50.40.10">
    <property type="entry name" value="Mitochondrial carrier domain"/>
    <property type="match status" value="1"/>
</dbReference>
<dbReference type="InterPro" id="IPR002067">
    <property type="entry name" value="Mit_carrier"/>
</dbReference>
<dbReference type="InterPro" id="IPR050567">
    <property type="entry name" value="Mitochondrial_Carrier"/>
</dbReference>
<dbReference type="InterPro" id="IPR018108">
    <property type="entry name" value="Mitochondrial_sb/sol_carrier"/>
</dbReference>
<dbReference type="InterPro" id="IPR023395">
    <property type="entry name" value="Mt_carrier_dom_sf"/>
</dbReference>
<dbReference type="PANTHER" id="PTHR45624:SF61">
    <property type="entry name" value="MITOCHONDRIAL BASIC AMINO ACIDS TRANSPORTER"/>
    <property type="match status" value="1"/>
</dbReference>
<dbReference type="PANTHER" id="PTHR45624">
    <property type="entry name" value="MITOCHONDRIAL BASIC AMINO ACIDS TRANSPORTER-RELATED"/>
    <property type="match status" value="1"/>
</dbReference>
<dbReference type="Pfam" id="PF00153">
    <property type="entry name" value="Mito_carr"/>
    <property type="match status" value="3"/>
</dbReference>
<dbReference type="PRINTS" id="PR00926">
    <property type="entry name" value="MITOCARRIER"/>
</dbReference>
<dbReference type="SUPFAM" id="SSF103506">
    <property type="entry name" value="Mitochondrial carrier"/>
    <property type="match status" value="1"/>
</dbReference>
<dbReference type="PROSITE" id="PS50920">
    <property type="entry name" value="SOLCAR"/>
    <property type="match status" value="3"/>
</dbReference>